<dbReference type="EC" id="2.7.4.3" evidence="1"/>
<dbReference type="EMBL" id="CP000855">
    <property type="protein sequence ID" value="ACJ16049.1"/>
    <property type="molecule type" value="Genomic_DNA"/>
</dbReference>
<dbReference type="RefSeq" id="WP_012571521.1">
    <property type="nucleotide sequence ID" value="NC_011529.1"/>
</dbReference>
<dbReference type="SMR" id="B6YUL3"/>
<dbReference type="STRING" id="523850.TON_0562"/>
<dbReference type="GeneID" id="7016860"/>
<dbReference type="KEGG" id="ton:TON_0562"/>
<dbReference type="PATRIC" id="fig|523850.10.peg.561"/>
<dbReference type="eggNOG" id="arCOG01038">
    <property type="taxonomic scope" value="Archaea"/>
</dbReference>
<dbReference type="HOGENOM" id="CLU_079096_0_1_2"/>
<dbReference type="OrthoDB" id="8730at2157"/>
<dbReference type="Proteomes" id="UP000002727">
    <property type="component" value="Chromosome"/>
</dbReference>
<dbReference type="GO" id="GO:0004017">
    <property type="term" value="F:adenylate kinase activity"/>
    <property type="evidence" value="ECO:0007669"/>
    <property type="project" value="UniProtKB-UniRule"/>
</dbReference>
<dbReference type="GO" id="GO:0005524">
    <property type="term" value="F:ATP binding"/>
    <property type="evidence" value="ECO:0007669"/>
    <property type="project" value="UniProtKB-UniRule"/>
</dbReference>
<dbReference type="GO" id="GO:0016887">
    <property type="term" value="F:ATP hydrolysis activity"/>
    <property type="evidence" value="ECO:0007669"/>
    <property type="project" value="InterPro"/>
</dbReference>
<dbReference type="GO" id="GO:0042274">
    <property type="term" value="P:ribosomal small subunit biogenesis"/>
    <property type="evidence" value="ECO:0007669"/>
    <property type="project" value="UniProtKB-UniRule"/>
</dbReference>
<dbReference type="GO" id="GO:0006364">
    <property type="term" value="P:rRNA processing"/>
    <property type="evidence" value="ECO:0007669"/>
    <property type="project" value="UniProtKB-KW"/>
</dbReference>
<dbReference type="Gene3D" id="3.40.50.300">
    <property type="entry name" value="P-loop containing nucleotide triphosphate hydrolases"/>
    <property type="match status" value="1"/>
</dbReference>
<dbReference type="HAMAP" id="MF_00039">
    <property type="entry name" value="Adenylate_kinase_AK6"/>
    <property type="match status" value="1"/>
</dbReference>
<dbReference type="InterPro" id="IPR020618">
    <property type="entry name" value="Adenyl_kinase_AK6"/>
</dbReference>
<dbReference type="InterPro" id="IPR027417">
    <property type="entry name" value="P-loop_NTPase"/>
</dbReference>
<dbReference type="NCBIfam" id="NF003012">
    <property type="entry name" value="PRK03839.1"/>
    <property type="match status" value="1"/>
</dbReference>
<dbReference type="PANTHER" id="PTHR12595:SF0">
    <property type="entry name" value="ADENYLATE KINASE ISOENZYME 6"/>
    <property type="match status" value="1"/>
</dbReference>
<dbReference type="PANTHER" id="PTHR12595">
    <property type="entry name" value="POS9-ACTIVATING FACTOR FAP7-RELATED"/>
    <property type="match status" value="1"/>
</dbReference>
<dbReference type="Pfam" id="PF13238">
    <property type="entry name" value="AAA_18"/>
    <property type="match status" value="1"/>
</dbReference>
<dbReference type="SUPFAM" id="SSF52540">
    <property type="entry name" value="P-loop containing nucleoside triphosphate hydrolases"/>
    <property type="match status" value="1"/>
</dbReference>
<evidence type="ECO:0000255" key="1">
    <source>
        <dbReference type="HAMAP-Rule" id="MF_00039"/>
    </source>
</evidence>
<protein>
    <recommendedName>
        <fullName evidence="1">Putative adenylate kinase</fullName>
        <shortName evidence="1">AK</shortName>
        <ecNumber evidence="1">2.7.4.3</ecNumber>
    </recommendedName>
    <alternativeName>
        <fullName evidence="1">ATP-AMP transphosphorylase</fullName>
    </alternativeName>
</protein>
<keyword id="KW-0067">ATP-binding</keyword>
<keyword id="KW-0418">Kinase</keyword>
<keyword id="KW-0547">Nucleotide-binding</keyword>
<keyword id="KW-0690">Ribosome biogenesis</keyword>
<keyword id="KW-0698">rRNA processing</keyword>
<keyword id="KW-0808">Transferase</keyword>
<sequence length="180" mass="20016">MIISVSGTPGAGKTTVSKLLSERLGYEYVSVKELALSRGIGERVSDEIEIDVDELARVVREEFSGRNVVLDGHLSHFVPADVVIILRAHPRLIAERLKARGYSKKKLAENVEAELVDVILVEALEENERVLEVDTTGKSPEEVVEEILTLLKSGTKKRVGIVDWSEEYDKVVQYLMLGDD</sequence>
<accession>B6YUL3</accession>
<comment type="function">
    <text evidence="1">Broad-specificity nucleoside monophosphate (NMP) kinase that catalyzes the reversible transfer of the terminal phosphate group between nucleoside triphosphates and monophosphates. Also has ATPase activity. Involved in the late maturation steps of the 30S ribosomal particles, specifically 16S rRNA maturation. While NMP activity is not required for ribosome maturation, ATPase activity is. Associates transiently with small ribosomal subunit protein uS11. ATP hydrolysis breaks the interaction with uS11. May temporarily remove uS11 from the ribosome to enable a conformational change of the ribosomal RNA that is needed for the final maturation step of the small ribosomal subunit.</text>
</comment>
<comment type="catalytic activity">
    <reaction evidence="1">
        <text>AMP + ATP = 2 ADP</text>
        <dbReference type="Rhea" id="RHEA:12973"/>
        <dbReference type="ChEBI" id="CHEBI:30616"/>
        <dbReference type="ChEBI" id="CHEBI:456215"/>
        <dbReference type="ChEBI" id="CHEBI:456216"/>
        <dbReference type="EC" id="2.7.4.3"/>
    </reaction>
</comment>
<comment type="catalytic activity">
    <reaction evidence="1">
        <text>ATP + H2O = ADP + phosphate + H(+)</text>
        <dbReference type="Rhea" id="RHEA:13065"/>
        <dbReference type="ChEBI" id="CHEBI:15377"/>
        <dbReference type="ChEBI" id="CHEBI:15378"/>
        <dbReference type="ChEBI" id="CHEBI:30616"/>
        <dbReference type="ChEBI" id="CHEBI:43474"/>
        <dbReference type="ChEBI" id="CHEBI:456216"/>
    </reaction>
</comment>
<comment type="subunit">
    <text evidence="1">Interacts with uS11. Not a structural component of 40S pre-ribosomes, but transiently interacts with them by binding to uS11.</text>
</comment>
<comment type="similarity">
    <text evidence="1">Belongs to the adenylate kinase family. AK6 subfamily.</text>
</comment>
<reference key="1">
    <citation type="journal article" date="2008" name="J. Bacteriol.">
        <title>The complete genome sequence of Thermococcus onnurineus NA1 reveals a mixed heterotrophic and carboxydotrophic metabolism.</title>
        <authorList>
            <person name="Lee H.S."/>
            <person name="Kang S.G."/>
            <person name="Bae S.S."/>
            <person name="Lim J.K."/>
            <person name="Cho Y."/>
            <person name="Kim Y.J."/>
            <person name="Jeon J.H."/>
            <person name="Cha S.-S."/>
            <person name="Kwon K.K."/>
            <person name="Kim H.-T."/>
            <person name="Park C.-J."/>
            <person name="Lee H.-W."/>
            <person name="Kim S.I."/>
            <person name="Chun J."/>
            <person name="Colwell R.R."/>
            <person name="Kim S.-J."/>
            <person name="Lee J.-H."/>
        </authorList>
    </citation>
    <scope>NUCLEOTIDE SEQUENCE [LARGE SCALE GENOMIC DNA]</scope>
    <source>
        <strain>NA1</strain>
    </source>
</reference>
<name>KAD6_THEON</name>
<feature type="chain" id="PRO_1000090696" description="Putative adenylate kinase">
    <location>
        <begin position="1"/>
        <end position="180"/>
    </location>
</feature>
<feature type="region of interest" description="NMP" evidence="1">
    <location>
        <begin position="30"/>
        <end position="50"/>
    </location>
</feature>
<feature type="region of interest" description="LID" evidence="1">
    <location>
        <begin position="99"/>
        <end position="109"/>
    </location>
</feature>
<feature type="binding site" evidence="1">
    <location>
        <position position="10"/>
    </location>
    <ligand>
        <name>ATP</name>
        <dbReference type="ChEBI" id="CHEBI:30616"/>
    </ligand>
</feature>
<feature type="binding site" evidence="1">
    <location>
        <position position="12"/>
    </location>
    <ligand>
        <name>ATP</name>
        <dbReference type="ChEBI" id="CHEBI:30616"/>
    </ligand>
</feature>
<feature type="binding site" evidence="1">
    <location>
        <position position="13"/>
    </location>
    <ligand>
        <name>ATP</name>
        <dbReference type="ChEBI" id="CHEBI:30616"/>
    </ligand>
</feature>
<feature type="binding site" evidence="1">
    <location>
        <position position="14"/>
    </location>
    <ligand>
        <name>ATP</name>
        <dbReference type="ChEBI" id="CHEBI:30616"/>
    </ligand>
</feature>
<feature type="binding site" evidence="1">
    <location>
        <position position="15"/>
    </location>
    <ligand>
        <name>ATP</name>
        <dbReference type="ChEBI" id="CHEBI:30616"/>
    </ligand>
</feature>
<feature type="binding site" evidence="1">
    <location>
        <position position="100"/>
    </location>
    <ligand>
        <name>ATP</name>
        <dbReference type="ChEBI" id="CHEBI:30616"/>
    </ligand>
</feature>
<feature type="binding site" evidence="1">
    <location>
        <position position="138"/>
    </location>
    <ligand>
        <name>ATP</name>
        <dbReference type="ChEBI" id="CHEBI:30616"/>
    </ligand>
</feature>
<gene>
    <name type="ordered locus">TON_0562</name>
</gene>
<proteinExistence type="inferred from homology"/>
<organism>
    <name type="scientific">Thermococcus onnurineus (strain NA1)</name>
    <dbReference type="NCBI Taxonomy" id="523850"/>
    <lineage>
        <taxon>Archaea</taxon>
        <taxon>Methanobacteriati</taxon>
        <taxon>Methanobacteriota</taxon>
        <taxon>Thermococci</taxon>
        <taxon>Thermococcales</taxon>
        <taxon>Thermococcaceae</taxon>
        <taxon>Thermococcus</taxon>
    </lineage>
</organism>